<proteinExistence type="inferred from homology"/>
<gene>
    <name evidence="1" type="primary">mltF</name>
    <name type="ordered locus">HS_1004</name>
</gene>
<reference key="1">
    <citation type="journal article" date="2007" name="J. Bacteriol.">
        <title>Complete genome sequence of Haemophilus somnus (Histophilus somni) strain 129Pt and comparison to Haemophilus ducreyi 35000HP and Haemophilus influenzae Rd.</title>
        <authorList>
            <person name="Challacombe J.F."/>
            <person name="Duncan A.J."/>
            <person name="Brettin T.S."/>
            <person name="Bruce D."/>
            <person name="Chertkov O."/>
            <person name="Detter J.C."/>
            <person name="Han C.S."/>
            <person name="Misra M."/>
            <person name="Richardson P."/>
            <person name="Tapia R."/>
            <person name="Thayer N."/>
            <person name="Xie G."/>
            <person name="Inzana T.J."/>
        </authorList>
    </citation>
    <scope>NUCLEOTIDE SEQUENCE [LARGE SCALE GENOMIC DNA]</scope>
    <source>
        <strain>129Pt</strain>
    </source>
</reference>
<dbReference type="EC" id="4.2.2.n1" evidence="1"/>
<dbReference type="EMBL" id="CP000436">
    <property type="protein sequence ID" value="ABI25279.1"/>
    <property type="status" value="ALT_INIT"/>
    <property type="molecule type" value="Genomic_DNA"/>
</dbReference>
<dbReference type="SMR" id="Q0I361"/>
<dbReference type="CAZy" id="GH23">
    <property type="family name" value="Glycoside Hydrolase Family 23"/>
</dbReference>
<dbReference type="KEGG" id="hso:HS_1004"/>
<dbReference type="eggNOG" id="COG4623">
    <property type="taxonomic scope" value="Bacteria"/>
</dbReference>
<dbReference type="HOGENOM" id="CLU_027494_0_1_6"/>
<dbReference type="GO" id="GO:0009279">
    <property type="term" value="C:cell outer membrane"/>
    <property type="evidence" value="ECO:0007669"/>
    <property type="project" value="UniProtKB-SubCell"/>
</dbReference>
<dbReference type="GO" id="GO:0008933">
    <property type="term" value="F:peptidoglycan lytic transglycosylase activity"/>
    <property type="evidence" value="ECO:0007669"/>
    <property type="project" value="UniProtKB-UniRule"/>
</dbReference>
<dbReference type="GO" id="GO:0016998">
    <property type="term" value="P:cell wall macromolecule catabolic process"/>
    <property type="evidence" value="ECO:0007669"/>
    <property type="project" value="UniProtKB-UniRule"/>
</dbReference>
<dbReference type="GO" id="GO:0071555">
    <property type="term" value="P:cell wall organization"/>
    <property type="evidence" value="ECO:0007669"/>
    <property type="project" value="UniProtKB-KW"/>
</dbReference>
<dbReference type="GO" id="GO:0009253">
    <property type="term" value="P:peptidoglycan catabolic process"/>
    <property type="evidence" value="ECO:0007669"/>
    <property type="project" value="TreeGrafter"/>
</dbReference>
<dbReference type="CDD" id="cd13403">
    <property type="entry name" value="MLTF-like"/>
    <property type="match status" value="1"/>
</dbReference>
<dbReference type="CDD" id="cd01009">
    <property type="entry name" value="PBP2_YfhD_N"/>
    <property type="match status" value="1"/>
</dbReference>
<dbReference type="FunFam" id="1.10.530.10:FF:000003">
    <property type="entry name" value="Membrane-bound lytic murein transglycosylase F"/>
    <property type="match status" value="1"/>
</dbReference>
<dbReference type="Gene3D" id="1.10.530.10">
    <property type="match status" value="1"/>
</dbReference>
<dbReference type="Gene3D" id="3.40.190.10">
    <property type="entry name" value="Periplasmic binding protein-like II"/>
    <property type="match status" value="2"/>
</dbReference>
<dbReference type="HAMAP" id="MF_02016">
    <property type="entry name" value="MltF"/>
    <property type="match status" value="1"/>
</dbReference>
<dbReference type="InterPro" id="IPR023346">
    <property type="entry name" value="Lysozyme-like_dom_sf"/>
</dbReference>
<dbReference type="InterPro" id="IPR023703">
    <property type="entry name" value="MltF"/>
</dbReference>
<dbReference type="InterPro" id="IPR001638">
    <property type="entry name" value="Solute-binding_3/MltF_N"/>
</dbReference>
<dbReference type="InterPro" id="IPR000189">
    <property type="entry name" value="Transglyc_AS"/>
</dbReference>
<dbReference type="InterPro" id="IPR008258">
    <property type="entry name" value="Transglycosylase_SLT_dom_1"/>
</dbReference>
<dbReference type="NCBIfam" id="NF008112">
    <property type="entry name" value="PRK10859.1"/>
    <property type="match status" value="1"/>
</dbReference>
<dbReference type="PANTHER" id="PTHR35936">
    <property type="entry name" value="MEMBRANE-BOUND LYTIC MUREIN TRANSGLYCOSYLASE F"/>
    <property type="match status" value="1"/>
</dbReference>
<dbReference type="PANTHER" id="PTHR35936:SF32">
    <property type="entry name" value="MEMBRANE-BOUND LYTIC MUREIN TRANSGLYCOSYLASE F"/>
    <property type="match status" value="1"/>
</dbReference>
<dbReference type="Pfam" id="PF00497">
    <property type="entry name" value="SBP_bac_3"/>
    <property type="match status" value="1"/>
</dbReference>
<dbReference type="Pfam" id="PF01464">
    <property type="entry name" value="SLT"/>
    <property type="match status" value="1"/>
</dbReference>
<dbReference type="SMART" id="SM00062">
    <property type="entry name" value="PBPb"/>
    <property type="match status" value="1"/>
</dbReference>
<dbReference type="SUPFAM" id="SSF53955">
    <property type="entry name" value="Lysozyme-like"/>
    <property type="match status" value="1"/>
</dbReference>
<dbReference type="SUPFAM" id="SSF53850">
    <property type="entry name" value="Periplasmic binding protein-like II"/>
    <property type="match status" value="1"/>
</dbReference>
<dbReference type="PROSITE" id="PS00922">
    <property type="entry name" value="TRANSGLYCOSYLASE"/>
    <property type="match status" value="1"/>
</dbReference>
<protein>
    <recommendedName>
        <fullName evidence="1">Membrane-bound lytic murein transglycosylase F</fullName>
        <ecNumber evidence="1">4.2.2.n1</ecNumber>
    </recommendedName>
    <alternativeName>
        <fullName evidence="1">Murein lyase F</fullName>
    </alternativeName>
</protein>
<evidence type="ECO:0000255" key="1">
    <source>
        <dbReference type="HAMAP-Rule" id="MF_02016"/>
    </source>
</evidence>
<evidence type="ECO:0000305" key="2"/>
<comment type="function">
    <text evidence="1">Murein-degrading enzyme that degrades murein glycan strands and insoluble, high-molecular weight murein sacculi, with the concomitant formation of a 1,6-anhydromuramoyl product. Lytic transglycosylases (LTs) play an integral role in the metabolism of the peptidoglycan (PG) sacculus. Their lytic action creates space within the PG sacculus to allow for its expansion as well as for the insertion of various structures such as secretion systems and flagella.</text>
</comment>
<comment type="catalytic activity">
    <reaction evidence="1">
        <text>Exolytic cleavage of the (1-&gt;4)-beta-glycosidic linkage between N-acetylmuramic acid (MurNAc) and N-acetylglucosamine (GlcNAc) residues in peptidoglycan, from either the reducing or the non-reducing ends of the peptidoglycan chains, with concomitant formation of a 1,6-anhydrobond in the MurNAc residue.</text>
        <dbReference type="EC" id="4.2.2.n1"/>
    </reaction>
</comment>
<comment type="subcellular location">
    <subcellularLocation>
        <location>Cell outer membrane</location>
        <topology>Peripheral membrane protein</topology>
    </subcellularLocation>
    <text evidence="1">Attached to the inner leaflet of the outer membrane.</text>
</comment>
<comment type="domain">
    <text evidence="1">The N-terminal domain does not have lytic activity and probably modulates enzymatic activity. The C-terminal domain is the catalytic active domain.</text>
</comment>
<comment type="similarity">
    <text evidence="1">In the N-terminal section; belongs to the bacterial solute-binding protein 3 family.</text>
</comment>
<comment type="similarity">
    <text evidence="1">In the C-terminal section; belongs to the transglycosylase Slt family.</text>
</comment>
<comment type="sequence caution" evidence="2">
    <conflict type="erroneous initiation">
        <sequence resource="EMBL-CDS" id="ABI25279"/>
    </conflict>
</comment>
<organism>
    <name type="scientific">Histophilus somni (strain 129Pt)</name>
    <name type="common">Haemophilus somnus</name>
    <dbReference type="NCBI Taxonomy" id="205914"/>
    <lineage>
        <taxon>Bacteria</taxon>
        <taxon>Pseudomonadati</taxon>
        <taxon>Pseudomonadota</taxon>
        <taxon>Gammaproteobacteria</taxon>
        <taxon>Pasteurellales</taxon>
        <taxon>Pasteurellaceae</taxon>
        <taxon>Histophilus</taxon>
    </lineage>
</organism>
<feature type="signal peptide" evidence="1">
    <location>
        <begin position="1"/>
        <end position="18"/>
    </location>
</feature>
<feature type="chain" id="PRO_0000353943" description="Membrane-bound lytic murein transglycosylase F">
    <location>
        <begin position="19"/>
        <end position="482"/>
    </location>
</feature>
<feature type="region of interest" description="Non-LT domain" evidence="1">
    <location>
        <begin position="19"/>
        <end position="266"/>
    </location>
</feature>
<feature type="region of interest" description="LT domain" evidence="1">
    <location>
        <begin position="267"/>
        <end position="482"/>
    </location>
</feature>
<feature type="active site" evidence="1">
    <location>
        <position position="311"/>
    </location>
</feature>
<keyword id="KW-0998">Cell outer membrane</keyword>
<keyword id="KW-0961">Cell wall biogenesis/degradation</keyword>
<keyword id="KW-0456">Lyase</keyword>
<keyword id="KW-0472">Membrane</keyword>
<keyword id="KW-0732">Signal</keyword>
<sequence>MKGLFIRIVLAICLSLWAIDMVFPWQQIVRSKQNYHTTIQERQKLIVGTINNPVSYFIGTNGETGLEYELSKAFANYLNVDLEMFPLNSADALFQALAQGKIDIAAASLFYQQDRSEKFKLGPAYHAASWQLTYRKGERRPITLENLSGKLVIPANSALNNILLAKKEKYPSLTWETSELSQEELLFQVAEGKIDYTIATSTEVSVNQQIKPQIAIAFNVTDEFTVHWYLSDKGSSELQAALLDFMNSAIENGLIARIEEKYFNHLNQFDYVDTRSYLNAIETVLPKYAPLFEKYKGDLDWRLLAAISYQESHWNPEATSPTGVRGMMMLTKATADRMNITNRLDPEQSIKAGSEYLHLLLKQMPDTILKEDRIWFALAAYNMGLGHLLDVRRLTKQLGGNPDNWLEVKKNLPLLAQKRYFTHLKYGYARGYEAFQYVENIRRYMNSIMNYYRLQQNQQDRQDRYENENNDVISTQTQQEQR</sequence>
<name>MLTF_HISS1</name>
<accession>Q0I361</accession>